<gene>
    <name evidence="1" type="primary">mtnD</name>
    <name type="ordered locus">ESA_02726</name>
</gene>
<reference key="1">
    <citation type="journal article" date="2010" name="PLoS ONE">
        <title>Genome sequence of Cronobacter sakazakii BAA-894 and comparative genomic hybridization analysis with other Cronobacter species.</title>
        <authorList>
            <person name="Kucerova E."/>
            <person name="Clifton S.W."/>
            <person name="Xia X.Q."/>
            <person name="Long F."/>
            <person name="Porwollik S."/>
            <person name="Fulton L."/>
            <person name="Fronick C."/>
            <person name="Minx P."/>
            <person name="Kyung K."/>
            <person name="Warren W."/>
            <person name="Fulton R."/>
            <person name="Feng D."/>
            <person name="Wollam A."/>
            <person name="Shah N."/>
            <person name="Bhonagiri V."/>
            <person name="Nash W.E."/>
            <person name="Hallsworth-Pepin K."/>
            <person name="Wilson R.K."/>
            <person name="McClelland M."/>
            <person name="Forsythe S.J."/>
        </authorList>
    </citation>
    <scope>NUCLEOTIDE SEQUENCE [LARGE SCALE GENOMIC DNA]</scope>
    <source>
        <strain>ATCC BAA-894</strain>
    </source>
</reference>
<name>MTND_CROS8</name>
<feature type="chain" id="PRO_0000359186" description="Acireductone dioxygenase">
    <location>
        <begin position="1"/>
        <end position="180"/>
    </location>
</feature>
<feature type="binding site" evidence="1">
    <location>
        <position position="97"/>
    </location>
    <ligand>
        <name>Fe(2+)</name>
        <dbReference type="ChEBI" id="CHEBI:29033"/>
    </ligand>
</feature>
<feature type="binding site" evidence="1">
    <location>
        <position position="97"/>
    </location>
    <ligand>
        <name>Ni(2+)</name>
        <dbReference type="ChEBI" id="CHEBI:49786"/>
    </ligand>
</feature>
<feature type="binding site" evidence="1">
    <location>
        <position position="99"/>
    </location>
    <ligand>
        <name>Fe(2+)</name>
        <dbReference type="ChEBI" id="CHEBI:29033"/>
    </ligand>
</feature>
<feature type="binding site" evidence="1">
    <location>
        <position position="99"/>
    </location>
    <ligand>
        <name>Ni(2+)</name>
        <dbReference type="ChEBI" id="CHEBI:49786"/>
    </ligand>
</feature>
<feature type="binding site" evidence="1">
    <location>
        <position position="103"/>
    </location>
    <ligand>
        <name>Fe(2+)</name>
        <dbReference type="ChEBI" id="CHEBI:29033"/>
    </ligand>
</feature>
<feature type="binding site" evidence="1">
    <location>
        <position position="103"/>
    </location>
    <ligand>
        <name>Ni(2+)</name>
        <dbReference type="ChEBI" id="CHEBI:49786"/>
    </ligand>
</feature>
<feature type="binding site" evidence="1">
    <location>
        <position position="141"/>
    </location>
    <ligand>
        <name>Fe(2+)</name>
        <dbReference type="ChEBI" id="CHEBI:29033"/>
    </ligand>
</feature>
<feature type="binding site" evidence="1">
    <location>
        <position position="141"/>
    </location>
    <ligand>
        <name>Ni(2+)</name>
        <dbReference type="ChEBI" id="CHEBI:49786"/>
    </ligand>
</feature>
<feature type="site" description="May play a role in metal incorporation in vivo" evidence="1">
    <location>
        <position position="96"/>
    </location>
</feature>
<feature type="site" description="May play a role in transmitting local conformational changes" evidence="1">
    <location>
        <position position="102"/>
    </location>
</feature>
<feature type="site" description="Important to generate the dianion" evidence="1">
    <location>
        <position position="105"/>
    </location>
</feature>
<protein>
    <recommendedName>
        <fullName evidence="1">Acireductone dioxygenase</fullName>
    </recommendedName>
    <alternativeName>
        <fullName evidence="1">1,2-dihydroxy-3-keto-5-methylthiopentene dioxygenase</fullName>
        <shortName evidence="1">DHK-MTPene dioxygenase</shortName>
    </alternativeName>
    <alternativeName>
        <fullName evidence="1">Acireductone dioxygenase (Fe(2+)-requiring)</fullName>
        <shortName evidence="1">ARD'</shortName>
        <shortName evidence="1">Fe-ARD</shortName>
        <ecNumber evidence="1">1.13.11.54</ecNumber>
    </alternativeName>
    <alternativeName>
        <fullName evidence="1">Acireductone dioxygenase (Ni(2+)-requiring)</fullName>
        <shortName evidence="1">ARD</shortName>
        <shortName evidence="1">Ni-ARD</shortName>
        <ecNumber evidence="1">1.13.11.53</ecNumber>
    </alternativeName>
</protein>
<sequence>MSALTIFADNGASEPLWQSTDADAIREQLNAQGVRFERWQADRELGDNPTPETVLTAYQHAIDLLVAEKGYQSWDVISMRADNPQKEALRDKFLNEHTHGEDEVRFFVEGAGLFCLHIGDKVYQVLCEKNDLISVPAGTPHWFDMGSEPHFTAIRIFDNPEGWIANFTGSPIAEAYPRLA</sequence>
<accession>A7MK12</accession>
<evidence type="ECO:0000255" key="1">
    <source>
        <dbReference type="HAMAP-Rule" id="MF_01682"/>
    </source>
</evidence>
<keyword id="KW-0028">Amino-acid biosynthesis</keyword>
<keyword id="KW-0223">Dioxygenase</keyword>
<keyword id="KW-0408">Iron</keyword>
<keyword id="KW-0479">Metal-binding</keyword>
<keyword id="KW-0486">Methionine biosynthesis</keyword>
<keyword id="KW-0533">Nickel</keyword>
<keyword id="KW-0560">Oxidoreductase</keyword>
<keyword id="KW-1185">Reference proteome</keyword>
<comment type="function">
    <text evidence="1">Catalyzes 2 different reactions between oxygen and the acireductone 1,2-dihydroxy-3-keto-5-methylthiopentene (DHK-MTPene) depending upon the metal bound in the active site. Fe-containing acireductone dioxygenase (Fe-ARD) produces formate and 2-keto-4-methylthiobutyrate (KMTB), the alpha-ketoacid precursor of methionine in the methionine recycle pathway. Ni-containing acireductone dioxygenase (Ni-ARD) produces methylthiopropionate, carbon monoxide and formate, and does not lie on the methionine recycle pathway.</text>
</comment>
<comment type="catalytic activity">
    <reaction evidence="1">
        <text>1,2-dihydroxy-5-(methylsulfanyl)pent-1-en-3-one + O2 = 3-(methylsulfanyl)propanoate + CO + formate + 2 H(+)</text>
        <dbReference type="Rhea" id="RHEA:14161"/>
        <dbReference type="ChEBI" id="CHEBI:15378"/>
        <dbReference type="ChEBI" id="CHEBI:15379"/>
        <dbReference type="ChEBI" id="CHEBI:15740"/>
        <dbReference type="ChEBI" id="CHEBI:17245"/>
        <dbReference type="ChEBI" id="CHEBI:49016"/>
        <dbReference type="ChEBI" id="CHEBI:49252"/>
        <dbReference type="EC" id="1.13.11.53"/>
    </reaction>
</comment>
<comment type="catalytic activity">
    <reaction evidence="1">
        <text>1,2-dihydroxy-5-(methylsulfanyl)pent-1-en-3-one + O2 = 4-methylsulfanyl-2-oxobutanoate + formate + 2 H(+)</text>
        <dbReference type="Rhea" id="RHEA:24504"/>
        <dbReference type="ChEBI" id="CHEBI:15378"/>
        <dbReference type="ChEBI" id="CHEBI:15379"/>
        <dbReference type="ChEBI" id="CHEBI:15740"/>
        <dbReference type="ChEBI" id="CHEBI:16723"/>
        <dbReference type="ChEBI" id="CHEBI:49252"/>
        <dbReference type="EC" id="1.13.11.54"/>
    </reaction>
</comment>
<comment type="cofactor">
    <cofactor evidence="1">
        <name>Fe(2+)</name>
        <dbReference type="ChEBI" id="CHEBI:29033"/>
    </cofactor>
    <text evidence="1">Binds 1 Fe(2+) cation per monomer.</text>
</comment>
<comment type="cofactor">
    <cofactor evidence="1">
        <name>Ni(2+)</name>
        <dbReference type="ChEBI" id="CHEBI:49786"/>
    </cofactor>
    <text evidence="1">Binds 1 nickel ion per monomer.</text>
</comment>
<comment type="pathway">
    <text evidence="1">Amino-acid biosynthesis; L-methionine biosynthesis via salvage pathway; L-methionine from S-methyl-5-thio-alpha-D-ribose 1-phosphate: step 5/6.</text>
</comment>
<comment type="subunit">
    <text evidence="1">Monomer.</text>
</comment>
<comment type="similarity">
    <text evidence="1">Belongs to the acireductone dioxygenase (ARD) family.</text>
</comment>
<dbReference type="EC" id="1.13.11.54" evidence="1"/>
<dbReference type="EC" id="1.13.11.53" evidence="1"/>
<dbReference type="EMBL" id="CP000783">
    <property type="protein sequence ID" value="ABU77958.1"/>
    <property type="molecule type" value="Genomic_DNA"/>
</dbReference>
<dbReference type="RefSeq" id="WP_012125391.1">
    <property type="nucleotide sequence ID" value="NC_009778.1"/>
</dbReference>
<dbReference type="SMR" id="A7MK12"/>
<dbReference type="KEGG" id="esa:ESA_02726"/>
<dbReference type="PATRIC" id="fig|290339.8.peg.2425"/>
<dbReference type="HOGENOM" id="CLU_125400_0_0_6"/>
<dbReference type="UniPathway" id="UPA00904">
    <property type="reaction ID" value="UER00878"/>
</dbReference>
<dbReference type="Proteomes" id="UP000000260">
    <property type="component" value="Chromosome"/>
</dbReference>
<dbReference type="GO" id="GO:0010308">
    <property type="term" value="F:acireductone dioxygenase (Ni2+-requiring) activity"/>
    <property type="evidence" value="ECO:0007669"/>
    <property type="project" value="UniProtKB-UniRule"/>
</dbReference>
<dbReference type="GO" id="GO:0010309">
    <property type="term" value="F:acireductone dioxygenase [iron(II)-requiring] activity"/>
    <property type="evidence" value="ECO:0007669"/>
    <property type="project" value="UniProtKB-UniRule"/>
</dbReference>
<dbReference type="GO" id="GO:0005506">
    <property type="term" value="F:iron ion binding"/>
    <property type="evidence" value="ECO:0007669"/>
    <property type="project" value="UniProtKB-UniRule"/>
</dbReference>
<dbReference type="GO" id="GO:0016151">
    <property type="term" value="F:nickel cation binding"/>
    <property type="evidence" value="ECO:0007669"/>
    <property type="project" value="UniProtKB-UniRule"/>
</dbReference>
<dbReference type="GO" id="GO:0019509">
    <property type="term" value="P:L-methionine salvage from methylthioadenosine"/>
    <property type="evidence" value="ECO:0007669"/>
    <property type="project" value="UniProtKB-UniRule"/>
</dbReference>
<dbReference type="GO" id="GO:0019284">
    <property type="term" value="P:L-methionine salvage from S-adenosylmethionine"/>
    <property type="evidence" value="ECO:0007669"/>
    <property type="project" value="InterPro"/>
</dbReference>
<dbReference type="CDD" id="cd02232">
    <property type="entry name" value="cupin_ARD"/>
    <property type="match status" value="1"/>
</dbReference>
<dbReference type="Gene3D" id="2.60.120.10">
    <property type="entry name" value="Jelly Rolls"/>
    <property type="match status" value="1"/>
</dbReference>
<dbReference type="HAMAP" id="MF_01682">
    <property type="entry name" value="Salvage_MtnD"/>
    <property type="match status" value="1"/>
</dbReference>
<dbReference type="InterPro" id="IPR004313">
    <property type="entry name" value="ARD"/>
</dbReference>
<dbReference type="InterPro" id="IPR023956">
    <property type="entry name" value="ARD_bac"/>
</dbReference>
<dbReference type="InterPro" id="IPR014710">
    <property type="entry name" value="RmlC-like_jellyroll"/>
</dbReference>
<dbReference type="InterPro" id="IPR011051">
    <property type="entry name" value="RmlC_Cupin_sf"/>
</dbReference>
<dbReference type="PANTHER" id="PTHR23418">
    <property type="entry name" value="ACIREDUCTONE DIOXYGENASE"/>
    <property type="match status" value="1"/>
</dbReference>
<dbReference type="PANTHER" id="PTHR23418:SF0">
    <property type="entry name" value="ACIREDUCTONE DIOXYGENASE"/>
    <property type="match status" value="1"/>
</dbReference>
<dbReference type="Pfam" id="PF03079">
    <property type="entry name" value="ARD"/>
    <property type="match status" value="1"/>
</dbReference>
<dbReference type="SUPFAM" id="SSF51182">
    <property type="entry name" value="RmlC-like cupins"/>
    <property type="match status" value="1"/>
</dbReference>
<proteinExistence type="inferred from homology"/>
<organism>
    <name type="scientific">Cronobacter sakazakii (strain ATCC BAA-894)</name>
    <name type="common">Enterobacter sakazakii</name>
    <dbReference type="NCBI Taxonomy" id="290339"/>
    <lineage>
        <taxon>Bacteria</taxon>
        <taxon>Pseudomonadati</taxon>
        <taxon>Pseudomonadota</taxon>
        <taxon>Gammaproteobacteria</taxon>
        <taxon>Enterobacterales</taxon>
        <taxon>Enterobacteriaceae</taxon>
        <taxon>Cronobacter</taxon>
    </lineage>
</organism>